<reference key="1">
    <citation type="journal article" date="2007" name="J. Bacteriol.">
        <title>Genome sequence of Avery's virulent serotype 2 strain D39 of Streptococcus pneumoniae and comparison with that of unencapsulated laboratory strain R6.</title>
        <authorList>
            <person name="Lanie J.A."/>
            <person name="Ng W.-L."/>
            <person name="Kazmierczak K.M."/>
            <person name="Andrzejewski T.M."/>
            <person name="Davidsen T.M."/>
            <person name="Wayne K.J."/>
            <person name="Tettelin H."/>
            <person name="Glass J.I."/>
            <person name="Winkler M.E."/>
        </authorList>
    </citation>
    <scope>NUCLEOTIDE SEQUENCE [LARGE SCALE GENOMIC DNA]</scope>
    <source>
        <strain>D39 / NCTC 7466</strain>
    </source>
</reference>
<organism>
    <name type="scientific">Streptococcus pneumoniae serotype 2 (strain D39 / NCTC 7466)</name>
    <dbReference type="NCBI Taxonomy" id="373153"/>
    <lineage>
        <taxon>Bacteria</taxon>
        <taxon>Bacillati</taxon>
        <taxon>Bacillota</taxon>
        <taxon>Bacilli</taxon>
        <taxon>Lactobacillales</taxon>
        <taxon>Streptococcaceae</taxon>
        <taxon>Streptococcus</taxon>
    </lineage>
</organism>
<keyword id="KW-0012">Acyltransferase</keyword>
<keyword id="KW-0963">Cytoplasm</keyword>
<keyword id="KW-0408">Iron</keyword>
<keyword id="KW-0479">Metal-binding</keyword>
<keyword id="KW-1185">Reference proteome</keyword>
<keyword id="KW-0808">Transferase</keyword>
<keyword id="KW-0819">tRNA processing</keyword>
<accession>Q04MU2</accession>
<proteinExistence type="inferred from homology"/>
<gene>
    <name evidence="1" type="primary">tsaD</name>
    <name type="synonym">gcp</name>
    <name type="ordered locus">SPD_0136</name>
</gene>
<dbReference type="EC" id="2.3.1.234" evidence="1"/>
<dbReference type="EMBL" id="CP000410">
    <property type="protein sequence ID" value="ABJ55359.1"/>
    <property type="molecule type" value="Genomic_DNA"/>
</dbReference>
<dbReference type="RefSeq" id="WP_000655051.1">
    <property type="nucleotide sequence ID" value="NZ_JAMLJR010000002.1"/>
</dbReference>
<dbReference type="SMR" id="Q04MU2"/>
<dbReference type="PaxDb" id="373153-SPD_0136"/>
<dbReference type="KEGG" id="spd:SPD_0136"/>
<dbReference type="eggNOG" id="COG0533">
    <property type="taxonomic scope" value="Bacteria"/>
</dbReference>
<dbReference type="HOGENOM" id="CLU_023208_0_2_9"/>
<dbReference type="BioCyc" id="SPNE373153:G1G6V-151-MONOMER"/>
<dbReference type="Proteomes" id="UP000001452">
    <property type="component" value="Chromosome"/>
</dbReference>
<dbReference type="GO" id="GO:0005737">
    <property type="term" value="C:cytoplasm"/>
    <property type="evidence" value="ECO:0007669"/>
    <property type="project" value="UniProtKB-SubCell"/>
</dbReference>
<dbReference type="GO" id="GO:0005506">
    <property type="term" value="F:iron ion binding"/>
    <property type="evidence" value="ECO:0007669"/>
    <property type="project" value="UniProtKB-UniRule"/>
</dbReference>
<dbReference type="GO" id="GO:0061711">
    <property type="term" value="F:N(6)-L-threonylcarbamoyladenine synthase activity"/>
    <property type="evidence" value="ECO:0007669"/>
    <property type="project" value="UniProtKB-EC"/>
</dbReference>
<dbReference type="GO" id="GO:0002949">
    <property type="term" value="P:tRNA threonylcarbamoyladenosine modification"/>
    <property type="evidence" value="ECO:0007669"/>
    <property type="project" value="UniProtKB-UniRule"/>
</dbReference>
<dbReference type="CDD" id="cd24133">
    <property type="entry name" value="ASKHA_NBD_TsaD_bac"/>
    <property type="match status" value="1"/>
</dbReference>
<dbReference type="FunFam" id="3.30.420.40:FF:000012">
    <property type="entry name" value="tRNA N6-adenosine threonylcarbamoyltransferase"/>
    <property type="match status" value="1"/>
</dbReference>
<dbReference type="FunFam" id="3.30.420.40:FF:000040">
    <property type="entry name" value="tRNA N6-adenosine threonylcarbamoyltransferase"/>
    <property type="match status" value="1"/>
</dbReference>
<dbReference type="Gene3D" id="3.30.420.40">
    <property type="match status" value="2"/>
</dbReference>
<dbReference type="HAMAP" id="MF_01445">
    <property type="entry name" value="TsaD"/>
    <property type="match status" value="1"/>
</dbReference>
<dbReference type="InterPro" id="IPR043129">
    <property type="entry name" value="ATPase_NBD"/>
</dbReference>
<dbReference type="InterPro" id="IPR000905">
    <property type="entry name" value="Gcp-like_dom"/>
</dbReference>
<dbReference type="InterPro" id="IPR017861">
    <property type="entry name" value="KAE1/TsaD"/>
</dbReference>
<dbReference type="InterPro" id="IPR017860">
    <property type="entry name" value="Peptidase_M22_CS"/>
</dbReference>
<dbReference type="InterPro" id="IPR022450">
    <property type="entry name" value="TsaD"/>
</dbReference>
<dbReference type="NCBIfam" id="TIGR00329">
    <property type="entry name" value="gcp_kae1"/>
    <property type="match status" value="1"/>
</dbReference>
<dbReference type="NCBIfam" id="TIGR03723">
    <property type="entry name" value="T6A_TsaD_YgjD"/>
    <property type="match status" value="1"/>
</dbReference>
<dbReference type="PANTHER" id="PTHR11735">
    <property type="entry name" value="TRNA N6-ADENOSINE THREONYLCARBAMOYLTRANSFERASE"/>
    <property type="match status" value="1"/>
</dbReference>
<dbReference type="PANTHER" id="PTHR11735:SF6">
    <property type="entry name" value="TRNA N6-ADENOSINE THREONYLCARBAMOYLTRANSFERASE, MITOCHONDRIAL"/>
    <property type="match status" value="1"/>
</dbReference>
<dbReference type="Pfam" id="PF00814">
    <property type="entry name" value="TsaD"/>
    <property type="match status" value="1"/>
</dbReference>
<dbReference type="PRINTS" id="PR00789">
    <property type="entry name" value="OSIALOPTASE"/>
</dbReference>
<dbReference type="SUPFAM" id="SSF53067">
    <property type="entry name" value="Actin-like ATPase domain"/>
    <property type="match status" value="1"/>
</dbReference>
<dbReference type="PROSITE" id="PS01016">
    <property type="entry name" value="GLYCOPROTEASE"/>
    <property type="match status" value="1"/>
</dbReference>
<protein>
    <recommendedName>
        <fullName evidence="1">tRNA N6-adenosine threonylcarbamoyltransferase</fullName>
        <ecNumber evidence="1">2.3.1.234</ecNumber>
    </recommendedName>
    <alternativeName>
        <fullName evidence="1">N6-L-threonylcarbamoyladenine synthase</fullName>
        <shortName evidence="1">t(6)A synthase</shortName>
    </alternativeName>
    <alternativeName>
        <fullName evidence="1">t(6)A37 threonylcarbamoyladenosine biosynthesis protein TsaD</fullName>
    </alternativeName>
    <alternativeName>
        <fullName evidence="1">tRNA threonylcarbamoyladenosine biosynthesis protein TsaD</fullName>
    </alternativeName>
</protein>
<evidence type="ECO:0000255" key="1">
    <source>
        <dbReference type="HAMAP-Rule" id="MF_01445"/>
    </source>
</evidence>
<feature type="chain" id="PRO_0000303563" description="tRNA N6-adenosine threonylcarbamoyltransferase">
    <location>
        <begin position="1"/>
        <end position="336"/>
    </location>
</feature>
<feature type="binding site" evidence="1">
    <location>
        <position position="114"/>
    </location>
    <ligand>
        <name>Fe cation</name>
        <dbReference type="ChEBI" id="CHEBI:24875"/>
    </ligand>
</feature>
<feature type="binding site" evidence="1">
    <location>
        <position position="118"/>
    </location>
    <ligand>
        <name>Fe cation</name>
        <dbReference type="ChEBI" id="CHEBI:24875"/>
    </ligand>
</feature>
<feature type="binding site" evidence="1">
    <location>
        <begin position="136"/>
        <end position="140"/>
    </location>
    <ligand>
        <name>substrate</name>
    </ligand>
</feature>
<feature type="binding site" evidence="1">
    <location>
        <position position="169"/>
    </location>
    <ligand>
        <name>substrate</name>
    </ligand>
</feature>
<feature type="binding site" evidence="1">
    <location>
        <position position="182"/>
    </location>
    <ligand>
        <name>substrate</name>
    </ligand>
</feature>
<feature type="binding site" evidence="1">
    <location>
        <position position="186"/>
    </location>
    <ligand>
        <name>substrate</name>
    </ligand>
</feature>
<feature type="binding site" evidence="1">
    <location>
        <position position="275"/>
    </location>
    <ligand>
        <name>substrate</name>
    </ligand>
</feature>
<feature type="binding site" evidence="1">
    <location>
        <position position="301"/>
    </location>
    <ligand>
        <name>Fe cation</name>
        <dbReference type="ChEBI" id="CHEBI:24875"/>
    </ligand>
</feature>
<sequence length="336" mass="36173">MKDRYILAFETSCDETSVAVLKNDDELLSNVIASQIESHKRFGGVVPEVASRHHVEVITACIEEALAEAGITEEDVTAVAVTYGPGLVGALLVGLSAAKAFAWAHGLPLIPVNHMAGHLMAAQSVEPLEFPLLALLVSGGHTELVYVSEAGDYKIVGETRDDAVGEAYDKVGRVMGLTYPAGREIDELAHQGQDIYDFPRAMIKEDNLEFSFSGLKSAFINLHHNAEQKGESLSTEDLCASFQAAVMDILMAKTKKALEKYPVKTLVVAGGVAANKGLRERLATEITDVNVIIPPLRLCGDNAGMIAYASVSEWNKENFANLDLNAKPSLAFDTME</sequence>
<comment type="function">
    <text evidence="1">Required for the formation of a threonylcarbamoyl group on adenosine at position 37 (t(6)A37) in tRNAs that read codons beginning with adenine. Is involved in the transfer of the threonylcarbamoyl moiety of threonylcarbamoyl-AMP (TC-AMP) to the N6 group of A37, together with TsaE and TsaB. TsaD likely plays a direct catalytic role in this reaction.</text>
</comment>
<comment type="catalytic activity">
    <reaction evidence="1">
        <text>L-threonylcarbamoyladenylate + adenosine(37) in tRNA = N(6)-L-threonylcarbamoyladenosine(37) in tRNA + AMP + H(+)</text>
        <dbReference type="Rhea" id="RHEA:37059"/>
        <dbReference type="Rhea" id="RHEA-COMP:10162"/>
        <dbReference type="Rhea" id="RHEA-COMP:10163"/>
        <dbReference type="ChEBI" id="CHEBI:15378"/>
        <dbReference type="ChEBI" id="CHEBI:73682"/>
        <dbReference type="ChEBI" id="CHEBI:74411"/>
        <dbReference type="ChEBI" id="CHEBI:74418"/>
        <dbReference type="ChEBI" id="CHEBI:456215"/>
        <dbReference type="EC" id="2.3.1.234"/>
    </reaction>
</comment>
<comment type="cofactor">
    <cofactor evidence="1">
        <name>Fe(2+)</name>
        <dbReference type="ChEBI" id="CHEBI:29033"/>
    </cofactor>
    <text evidence="1">Binds 1 Fe(2+) ion per subunit.</text>
</comment>
<comment type="subcellular location">
    <subcellularLocation>
        <location evidence="1">Cytoplasm</location>
    </subcellularLocation>
</comment>
<comment type="similarity">
    <text evidence="1">Belongs to the KAE1 / TsaD family.</text>
</comment>
<name>TSAD_STRP2</name>